<sequence>AADIFAKFKTSMEVK</sequence>
<protein>
    <recommendedName>
        <fullName>Methyl-coenzyme M reductase subunit alpha</fullName>
        <ecNumber evidence="1">2.8.4.1</ecNumber>
    </recommendedName>
    <alternativeName>
        <fullName>Coenzyme-B sulfoethylthiotransferase alpha</fullName>
    </alternativeName>
</protein>
<name>MCRA_METTE</name>
<evidence type="ECO:0000269" key="1">
    <source>
    </source>
</evidence>
<evidence type="ECO:0000305" key="2"/>
<evidence type="ECO:0000305" key="3">
    <source>
    </source>
</evidence>
<organism>
    <name type="scientific">Methanosarcina thermophila</name>
    <dbReference type="NCBI Taxonomy" id="2210"/>
    <lineage>
        <taxon>Archaea</taxon>
        <taxon>Methanobacteriati</taxon>
        <taxon>Methanobacteriota</taxon>
        <taxon>Stenosarchaea group</taxon>
        <taxon>Methanomicrobia</taxon>
        <taxon>Methanosarcinales</taxon>
        <taxon>Methanosarcinaceae</taxon>
        <taxon>Methanosarcina</taxon>
    </lineage>
</organism>
<dbReference type="EC" id="2.8.4.1" evidence="1"/>
<dbReference type="UniPathway" id="UPA00646">
    <property type="reaction ID" value="UER00699"/>
</dbReference>
<dbReference type="GO" id="GO:0005737">
    <property type="term" value="C:cytoplasm"/>
    <property type="evidence" value="ECO:0007669"/>
    <property type="project" value="UniProtKB-SubCell"/>
</dbReference>
<dbReference type="GO" id="GO:0050524">
    <property type="term" value="F:coenzyme-B sulfoethylthiotransferase activity"/>
    <property type="evidence" value="ECO:0007669"/>
    <property type="project" value="UniProtKB-EC"/>
</dbReference>
<dbReference type="GO" id="GO:0015948">
    <property type="term" value="P:methanogenesis"/>
    <property type="evidence" value="ECO:0007669"/>
    <property type="project" value="UniProtKB-KW"/>
</dbReference>
<keyword id="KW-0963">Cytoplasm</keyword>
<keyword id="KW-0903">Direct protein sequencing</keyword>
<keyword id="KW-0484">Methanogenesis</keyword>
<keyword id="KW-0533">Nickel</keyword>
<keyword id="KW-0808">Transferase</keyword>
<proteinExistence type="evidence at protein level"/>
<comment type="function">
    <text evidence="1">Component of the methyl-coenzyme M reductase (MCR) I that catalyzes the reductive cleavage of methyl-coenzyme M (CoM-S-CH3 or 2-(methylthio)ethanesulfonate) using coenzyme B (CoB or 7-mercaptoheptanoylthreonine phosphate) as reductant which results in the production of methane and the mixed heterodisulfide of CoB and CoM (CoM-S-S-CoB). This is the final step in methanogenesis.</text>
</comment>
<comment type="catalytic activity">
    <reaction evidence="1">
        <text>coenzyme B + methyl-coenzyme M = methane + coenzyme M-coenzyme B heterodisulfide</text>
        <dbReference type="Rhea" id="RHEA:12532"/>
        <dbReference type="ChEBI" id="CHEBI:16183"/>
        <dbReference type="ChEBI" id="CHEBI:58286"/>
        <dbReference type="ChEBI" id="CHEBI:58411"/>
        <dbReference type="ChEBI" id="CHEBI:58596"/>
        <dbReference type="EC" id="2.8.4.1"/>
    </reaction>
    <physiologicalReaction direction="left-to-right" evidence="3">
        <dbReference type="Rhea" id="RHEA:12533"/>
    </physiologicalReaction>
</comment>
<comment type="cofactor">
    <cofactor evidence="1">
        <name>coenzyme F430</name>
        <dbReference type="ChEBI" id="CHEBI:60540"/>
    </cofactor>
    <text evidence="1">Binds 1 coenzyme F430 non-covalently per MCR heterotrimeric complex. Coenzyme F430 is a yellow nickel porphinoid. Methyl-coenzyme-M reductase is activated when the enzyme-bound coenzyme F430 is reduced, probably to the Ni(I) oxidation state.</text>
</comment>
<comment type="biophysicochemical properties">
    <kinetics>
        <KM evidence="1">3.3 mM for methyl-coenzyme M</KM>
        <KM evidence="1">59 uM for coenzyme B</KM>
        <Vmax evidence="1">125.0 nmol/min/mg enzyme towards coenzyme B</Vmax>
    </kinetics>
    <phDependence>
        <text evidence="1">Optimum pH is 7.0.</text>
    </phDependence>
    <temperatureDependence>
        <text evidence="1">Optimum temperature is 60 degrees Celsius.</text>
    </temperatureDependence>
</comment>
<comment type="pathway">
    <text evidence="3">One-carbon metabolism; methyl-coenzyme M reduction; methane from methyl-coenzyme M: step 1/1.</text>
</comment>
<comment type="subunit">
    <text evidence="1">MCR from M.thermophila is a heterotrimer composed of an alpha, a beta, and a gamma subunit.</text>
</comment>
<comment type="subcellular location">
    <subcellularLocation>
        <location evidence="3">Cytoplasm</location>
    </subcellularLocation>
</comment>
<comment type="similarity">
    <text evidence="2">Belongs to the methyl-coenzyme M reductase alpha subunit family.</text>
</comment>
<reference key="1">
    <citation type="journal article" date="1991" name="J. Bacteriol.">
        <title>Purification and properties of methyl coenzyme M methylreductase from acetate-grown Methanosarcina thermophila.</title>
        <authorList>
            <person name="Jablonski P.E."/>
            <person name="Ferry J.G."/>
        </authorList>
    </citation>
    <scope>PROTEIN SEQUENCE</scope>
    <scope>FUNCTION</scope>
    <scope>CATALYTIC ACTIVITY</scope>
    <scope>COFACTOR</scope>
    <scope>BIOPHYSICOCHEMICAL PROPERTIES</scope>
    <scope>SUBUNIT</scope>
    <scope>SUBCELLULAR LOCATION</scope>
    <source>
        <strain>ATCC 43570 / DSM 1825 / OCM 12 / TM-1</strain>
    </source>
</reference>
<feature type="chain" id="PRO_0000147459" description="Methyl-coenzyme M reductase subunit alpha">
    <location>
        <begin position="1"/>
        <end position="15" status="greater than"/>
    </location>
</feature>
<feature type="non-terminal residue">
    <location>
        <position position="15"/>
    </location>
</feature>
<accession>P22948</accession>